<proteinExistence type="inferred from homology"/>
<keyword id="KW-0131">Cell cycle</keyword>
<keyword id="KW-0132">Cell division</keyword>
<keyword id="KW-0143">Chaperone</keyword>
<keyword id="KW-0963">Cytoplasm</keyword>
<keyword id="KW-0413">Isomerase</keyword>
<keyword id="KW-0697">Rotamase</keyword>
<protein>
    <recommendedName>
        <fullName evidence="1">Trigger factor</fullName>
        <shortName evidence="1">TF</shortName>
        <ecNumber evidence="1">5.2.1.8</ecNumber>
    </recommendedName>
    <alternativeName>
        <fullName evidence="1">PPIase</fullName>
    </alternativeName>
</protein>
<sequence>MQVTQEKRPGSRVGLKIVVEADQVKRSYEKTLRQLERNIQIPGFRKGKAPRNLVIRQVGRERVMASAVDDLINEAIQQALKDTQLHPISRFELDDKVEQLLDRFNPEADFSFSGYVEVYPEARVGQYKGLTVTATRVTVKPEQIDQLIDRWRDQRATLLPVEDRPAQLGDVVVIDFQARDAEGNPLEEIAAQDFQLELKEENFIPGFVAGVVGMQLDQTKEITATFPDDYFRKELAGKTVTFTVCLKEIKTKELPELDDAFVQEISEFQTVAELREHLQKRLEQDALRQSEENLETAILNAILETTEVDLPETLVEQETTQLLARSLQSLQQQQGVTPGEIRKFLSQLPPETLNQLMERHRPEAINRLRRTLALSAIVRQEQIAVGPNELEVEVEEVMAAYAQQGQKLDRERVRQAVHEDLLANKVMAWLKSQTTVNWVDSEGNPTEPPTLSPRSEGEDRQERSESARAGVPETEFEAEKPEGSAIPEAVEPPVDAKAEGEVATEPQAALPSVEAEASGIPEAVEPSAEAATDPAGLQLEQAVAETPKAGKKSKKDK</sequence>
<accession>Q2JV31</accession>
<comment type="function">
    <text evidence="1">Involved in protein export. Acts as a chaperone by maintaining the newly synthesized protein in an open conformation. Functions as a peptidyl-prolyl cis-trans isomerase.</text>
</comment>
<comment type="catalytic activity">
    <reaction evidence="1">
        <text>[protein]-peptidylproline (omega=180) = [protein]-peptidylproline (omega=0)</text>
        <dbReference type="Rhea" id="RHEA:16237"/>
        <dbReference type="Rhea" id="RHEA-COMP:10747"/>
        <dbReference type="Rhea" id="RHEA-COMP:10748"/>
        <dbReference type="ChEBI" id="CHEBI:83833"/>
        <dbReference type="ChEBI" id="CHEBI:83834"/>
        <dbReference type="EC" id="5.2.1.8"/>
    </reaction>
</comment>
<comment type="subcellular location">
    <subcellularLocation>
        <location>Cytoplasm</location>
    </subcellularLocation>
    <text evidence="1">About half TF is bound to the ribosome near the polypeptide exit tunnel while the other half is free in the cytoplasm.</text>
</comment>
<comment type="domain">
    <text evidence="1">Consists of 3 domains; the N-terminus binds the ribosome, the middle domain has PPIase activity, while the C-terminus has intrinsic chaperone activity on its own.</text>
</comment>
<comment type="similarity">
    <text evidence="1">Belongs to the FKBP-type PPIase family. Tig subfamily.</text>
</comment>
<evidence type="ECO:0000255" key="1">
    <source>
        <dbReference type="HAMAP-Rule" id="MF_00303"/>
    </source>
</evidence>
<evidence type="ECO:0000256" key="2">
    <source>
        <dbReference type="SAM" id="MobiDB-lite"/>
    </source>
</evidence>
<feature type="chain" id="PRO_0000256634" description="Trigger factor">
    <location>
        <begin position="1"/>
        <end position="557"/>
    </location>
</feature>
<feature type="domain" description="PPIase FKBP-type" evidence="1">
    <location>
        <begin position="169"/>
        <end position="255"/>
    </location>
</feature>
<feature type="region of interest" description="Disordered" evidence="2">
    <location>
        <begin position="438"/>
        <end position="557"/>
    </location>
</feature>
<feature type="compositionally biased region" description="Basic and acidic residues" evidence="2">
    <location>
        <begin position="455"/>
        <end position="466"/>
    </location>
</feature>
<organism>
    <name type="scientific">Synechococcus sp. (strain JA-3-3Ab)</name>
    <name type="common">Cyanobacteria bacterium Yellowstone A-Prime</name>
    <dbReference type="NCBI Taxonomy" id="321327"/>
    <lineage>
        <taxon>Bacteria</taxon>
        <taxon>Bacillati</taxon>
        <taxon>Cyanobacteriota</taxon>
        <taxon>Cyanophyceae</taxon>
        <taxon>Synechococcales</taxon>
        <taxon>Synechococcaceae</taxon>
        <taxon>Synechococcus</taxon>
    </lineage>
</organism>
<name>TIG_SYNJA</name>
<gene>
    <name evidence="1" type="primary">tig</name>
    <name type="ordered locus">CYA_1238</name>
</gene>
<reference key="1">
    <citation type="journal article" date="2007" name="ISME J.">
        <title>Population level functional diversity in a microbial community revealed by comparative genomic and metagenomic analyses.</title>
        <authorList>
            <person name="Bhaya D."/>
            <person name="Grossman A.R."/>
            <person name="Steunou A.-S."/>
            <person name="Khuri N."/>
            <person name="Cohan F.M."/>
            <person name="Hamamura N."/>
            <person name="Melendrez M.C."/>
            <person name="Bateson M.M."/>
            <person name="Ward D.M."/>
            <person name="Heidelberg J.F."/>
        </authorList>
    </citation>
    <scope>NUCLEOTIDE SEQUENCE [LARGE SCALE GENOMIC DNA]</scope>
    <source>
        <strain>JA-3-3Ab</strain>
    </source>
</reference>
<dbReference type="EC" id="5.2.1.8" evidence="1"/>
<dbReference type="EMBL" id="CP000239">
    <property type="protein sequence ID" value="ABC99421.1"/>
    <property type="molecule type" value="Genomic_DNA"/>
</dbReference>
<dbReference type="RefSeq" id="WP_011430102.1">
    <property type="nucleotide sequence ID" value="NC_007775.1"/>
</dbReference>
<dbReference type="SMR" id="Q2JV31"/>
<dbReference type="STRING" id="321327.CYA_1238"/>
<dbReference type="KEGG" id="cya:CYA_1238"/>
<dbReference type="eggNOG" id="COG0544">
    <property type="taxonomic scope" value="Bacteria"/>
</dbReference>
<dbReference type="HOGENOM" id="CLU_033058_3_1_3"/>
<dbReference type="OrthoDB" id="9767721at2"/>
<dbReference type="Proteomes" id="UP000008818">
    <property type="component" value="Chromosome"/>
</dbReference>
<dbReference type="GO" id="GO:0005737">
    <property type="term" value="C:cytoplasm"/>
    <property type="evidence" value="ECO:0007669"/>
    <property type="project" value="UniProtKB-SubCell"/>
</dbReference>
<dbReference type="GO" id="GO:0003755">
    <property type="term" value="F:peptidyl-prolyl cis-trans isomerase activity"/>
    <property type="evidence" value="ECO:0007669"/>
    <property type="project" value="UniProtKB-UniRule"/>
</dbReference>
<dbReference type="GO" id="GO:0044183">
    <property type="term" value="F:protein folding chaperone"/>
    <property type="evidence" value="ECO:0007669"/>
    <property type="project" value="TreeGrafter"/>
</dbReference>
<dbReference type="GO" id="GO:0043022">
    <property type="term" value="F:ribosome binding"/>
    <property type="evidence" value="ECO:0007669"/>
    <property type="project" value="TreeGrafter"/>
</dbReference>
<dbReference type="GO" id="GO:0051083">
    <property type="term" value="P:'de novo' cotranslational protein folding"/>
    <property type="evidence" value="ECO:0007669"/>
    <property type="project" value="TreeGrafter"/>
</dbReference>
<dbReference type="GO" id="GO:0051301">
    <property type="term" value="P:cell division"/>
    <property type="evidence" value="ECO:0007669"/>
    <property type="project" value="UniProtKB-KW"/>
</dbReference>
<dbReference type="GO" id="GO:0061077">
    <property type="term" value="P:chaperone-mediated protein folding"/>
    <property type="evidence" value="ECO:0007669"/>
    <property type="project" value="TreeGrafter"/>
</dbReference>
<dbReference type="GO" id="GO:0015031">
    <property type="term" value="P:protein transport"/>
    <property type="evidence" value="ECO:0007669"/>
    <property type="project" value="UniProtKB-UniRule"/>
</dbReference>
<dbReference type="GO" id="GO:0043335">
    <property type="term" value="P:protein unfolding"/>
    <property type="evidence" value="ECO:0007669"/>
    <property type="project" value="TreeGrafter"/>
</dbReference>
<dbReference type="FunFam" id="3.10.50.40:FF:000001">
    <property type="entry name" value="Trigger factor"/>
    <property type="match status" value="1"/>
</dbReference>
<dbReference type="FunFam" id="3.30.70.1050:FF:000004">
    <property type="entry name" value="Trigger factor"/>
    <property type="match status" value="1"/>
</dbReference>
<dbReference type="Gene3D" id="3.10.50.40">
    <property type="match status" value="1"/>
</dbReference>
<dbReference type="Gene3D" id="3.30.70.1050">
    <property type="entry name" value="Trigger factor ribosome-binding domain"/>
    <property type="match status" value="1"/>
</dbReference>
<dbReference type="Gene3D" id="1.10.3120.10">
    <property type="entry name" value="Trigger factor, C-terminal domain"/>
    <property type="match status" value="1"/>
</dbReference>
<dbReference type="HAMAP" id="MF_00303">
    <property type="entry name" value="Trigger_factor_Tig"/>
    <property type="match status" value="1"/>
</dbReference>
<dbReference type="InterPro" id="IPR046357">
    <property type="entry name" value="PPIase_dom_sf"/>
</dbReference>
<dbReference type="InterPro" id="IPR001179">
    <property type="entry name" value="PPIase_FKBP_dom"/>
</dbReference>
<dbReference type="InterPro" id="IPR005215">
    <property type="entry name" value="Trig_fac"/>
</dbReference>
<dbReference type="InterPro" id="IPR008880">
    <property type="entry name" value="Trigger_fac_C"/>
</dbReference>
<dbReference type="InterPro" id="IPR037041">
    <property type="entry name" value="Trigger_fac_C_sf"/>
</dbReference>
<dbReference type="InterPro" id="IPR008881">
    <property type="entry name" value="Trigger_fac_ribosome-bd_bac"/>
</dbReference>
<dbReference type="InterPro" id="IPR036611">
    <property type="entry name" value="Trigger_fac_ribosome-bd_sf"/>
</dbReference>
<dbReference type="InterPro" id="IPR027304">
    <property type="entry name" value="Trigger_fact/SurA_dom_sf"/>
</dbReference>
<dbReference type="NCBIfam" id="TIGR00115">
    <property type="entry name" value="tig"/>
    <property type="match status" value="1"/>
</dbReference>
<dbReference type="PANTHER" id="PTHR30560">
    <property type="entry name" value="TRIGGER FACTOR CHAPERONE AND PEPTIDYL-PROLYL CIS/TRANS ISOMERASE"/>
    <property type="match status" value="1"/>
</dbReference>
<dbReference type="PANTHER" id="PTHR30560:SF3">
    <property type="entry name" value="TRIGGER FACTOR-LIKE PROTEIN TIG, CHLOROPLASTIC"/>
    <property type="match status" value="1"/>
</dbReference>
<dbReference type="Pfam" id="PF00254">
    <property type="entry name" value="FKBP_C"/>
    <property type="match status" value="1"/>
</dbReference>
<dbReference type="Pfam" id="PF05698">
    <property type="entry name" value="Trigger_C"/>
    <property type="match status" value="1"/>
</dbReference>
<dbReference type="Pfam" id="PF05697">
    <property type="entry name" value="Trigger_N"/>
    <property type="match status" value="1"/>
</dbReference>
<dbReference type="SUPFAM" id="SSF54534">
    <property type="entry name" value="FKBP-like"/>
    <property type="match status" value="1"/>
</dbReference>
<dbReference type="SUPFAM" id="SSF109998">
    <property type="entry name" value="Triger factor/SurA peptide-binding domain-like"/>
    <property type="match status" value="1"/>
</dbReference>
<dbReference type="SUPFAM" id="SSF102735">
    <property type="entry name" value="Trigger factor ribosome-binding domain"/>
    <property type="match status" value="1"/>
</dbReference>